<keyword id="KW-1185">Reference proteome</keyword>
<keyword id="KW-0687">Ribonucleoprotein</keyword>
<keyword id="KW-0689">Ribosomal protein</keyword>
<keyword id="KW-0694">RNA-binding</keyword>
<keyword id="KW-0699">rRNA-binding</keyword>
<reference key="1">
    <citation type="submission" date="2009-01" db="EMBL/GenBank/DDBJ databases">
        <title>Complete sequence of Geobacter sp. FRC-32.</title>
        <authorList>
            <consortium name="US DOE Joint Genome Institute"/>
            <person name="Lucas S."/>
            <person name="Copeland A."/>
            <person name="Lapidus A."/>
            <person name="Glavina del Rio T."/>
            <person name="Dalin E."/>
            <person name="Tice H."/>
            <person name="Bruce D."/>
            <person name="Goodwin L."/>
            <person name="Pitluck S."/>
            <person name="Saunders E."/>
            <person name="Brettin T."/>
            <person name="Detter J.C."/>
            <person name="Han C."/>
            <person name="Larimer F."/>
            <person name="Land M."/>
            <person name="Hauser L."/>
            <person name="Kyrpides N."/>
            <person name="Ovchinnikova G."/>
            <person name="Kostka J."/>
            <person name="Richardson P."/>
        </authorList>
    </citation>
    <scope>NUCLEOTIDE SEQUENCE [LARGE SCALE GENOMIC DNA]</scope>
    <source>
        <strain>DSM 22248 / JCM 15807 / FRC-32</strain>
    </source>
</reference>
<protein>
    <recommendedName>
        <fullName evidence="1">Small ribosomal subunit protein bS18</fullName>
    </recommendedName>
    <alternativeName>
        <fullName evidence="3">30S ribosomal protein S18</fullName>
    </alternativeName>
</protein>
<organism>
    <name type="scientific">Geotalea daltonii (strain DSM 22248 / JCM 15807 / FRC-32)</name>
    <name type="common">Geobacter daltonii</name>
    <dbReference type="NCBI Taxonomy" id="316067"/>
    <lineage>
        <taxon>Bacteria</taxon>
        <taxon>Pseudomonadati</taxon>
        <taxon>Thermodesulfobacteriota</taxon>
        <taxon>Desulfuromonadia</taxon>
        <taxon>Geobacterales</taxon>
        <taxon>Geobacteraceae</taxon>
        <taxon>Geotalea</taxon>
    </lineage>
</organism>
<accession>B9M5U9</accession>
<proteinExistence type="inferred from homology"/>
<sequence length="91" mass="10561">MSDERAPQRSTGPRKKRPFQRRKVCRFCADKQVTIDYKDPRTLRYFISERGKIIPRRISGNCAKHQREITEAIKRARNIALLPIAGSHAAQ</sequence>
<gene>
    <name evidence="1" type="primary">rpsR</name>
    <name type="ordered locus">Geob_1572</name>
</gene>
<dbReference type="EMBL" id="CP001390">
    <property type="protein sequence ID" value="ACM19930.1"/>
    <property type="molecule type" value="Genomic_DNA"/>
</dbReference>
<dbReference type="RefSeq" id="WP_012646659.1">
    <property type="nucleotide sequence ID" value="NC_011979.1"/>
</dbReference>
<dbReference type="SMR" id="B9M5U9"/>
<dbReference type="STRING" id="316067.Geob_1572"/>
<dbReference type="KEGG" id="geo:Geob_1572"/>
<dbReference type="eggNOG" id="COG0238">
    <property type="taxonomic scope" value="Bacteria"/>
</dbReference>
<dbReference type="HOGENOM" id="CLU_148710_2_2_7"/>
<dbReference type="OrthoDB" id="9812008at2"/>
<dbReference type="Proteomes" id="UP000007721">
    <property type="component" value="Chromosome"/>
</dbReference>
<dbReference type="GO" id="GO:0022627">
    <property type="term" value="C:cytosolic small ribosomal subunit"/>
    <property type="evidence" value="ECO:0007669"/>
    <property type="project" value="TreeGrafter"/>
</dbReference>
<dbReference type="GO" id="GO:0070181">
    <property type="term" value="F:small ribosomal subunit rRNA binding"/>
    <property type="evidence" value="ECO:0007669"/>
    <property type="project" value="TreeGrafter"/>
</dbReference>
<dbReference type="GO" id="GO:0003735">
    <property type="term" value="F:structural constituent of ribosome"/>
    <property type="evidence" value="ECO:0007669"/>
    <property type="project" value="InterPro"/>
</dbReference>
<dbReference type="GO" id="GO:0006412">
    <property type="term" value="P:translation"/>
    <property type="evidence" value="ECO:0007669"/>
    <property type="project" value="UniProtKB-UniRule"/>
</dbReference>
<dbReference type="FunFam" id="4.10.640.10:FF:000004">
    <property type="entry name" value="30S ribosomal protein S18"/>
    <property type="match status" value="1"/>
</dbReference>
<dbReference type="Gene3D" id="4.10.640.10">
    <property type="entry name" value="Ribosomal protein S18"/>
    <property type="match status" value="1"/>
</dbReference>
<dbReference type="HAMAP" id="MF_00270">
    <property type="entry name" value="Ribosomal_bS18"/>
    <property type="match status" value="1"/>
</dbReference>
<dbReference type="InterPro" id="IPR001648">
    <property type="entry name" value="Ribosomal_bS18"/>
</dbReference>
<dbReference type="InterPro" id="IPR018275">
    <property type="entry name" value="Ribosomal_bS18_CS"/>
</dbReference>
<dbReference type="InterPro" id="IPR036870">
    <property type="entry name" value="Ribosomal_bS18_sf"/>
</dbReference>
<dbReference type="NCBIfam" id="TIGR00165">
    <property type="entry name" value="S18"/>
    <property type="match status" value="1"/>
</dbReference>
<dbReference type="PANTHER" id="PTHR13479">
    <property type="entry name" value="30S RIBOSOMAL PROTEIN S18"/>
    <property type="match status" value="1"/>
</dbReference>
<dbReference type="PANTHER" id="PTHR13479:SF40">
    <property type="entry name" value="SMALL RIBOSOMAL SUBUNIT PROTEIN BS18M"/>
    <property type="match status" value="1"/>
</dbReference>
<dbReference type="Pfam" id="PF01084">
    <property type="entry name" value="Ribosomal_S18"/>
    <property type="match status" value="1"/>
</dbReference>
<dbReference type="PRINTS" id="PR00974">
    <property type="entry name" value="RIBOSOMALS18"/>
</dbReference>
<dbReference type="SUPFAM" id="SSF46911">
    <property type="entry name" value="Ribosomal protein S18"/>
    <property type="match status" value="1"/>
</dbReference>
<dbReference type="PROSITE" id="PS00057">
    <property type="entry name" value="RIBOSOMAL_S18"/>
    <property type="match status" value="1"/>
</dbReference>
<evidence type="ECO:0000255" key="1">
    <source>
        <dbReference type="HAMAP-Rule" id="MF_00270"/>
    </source>
</evidence>
<evidence type="ECO:0000256" key="2">
    <source>
        <dbReference type="SAM" id="MobiDB-lite"/>
    </source>
</evidence>
<evidence type="ECO:0000305" key="3"/>
<name>RS18_GEODF</name>
<feature type="chain" id="PRO_1000125804" description="Small ribosomal subunit protein bS18">
    <location>
        <begin position="1"/>
        <end position="91"/>
    </location>
</feature>
<feature type="region of interest" description="Disordered" evidence="2">
    <location>
        <begin position="1"/>
        <end position="21"/>
    </location>
</feature>
<feature type="compositionally biased region" description="Basic residues" evidence="2">
    <location>
        <begin position="12"/>
        <end position="21"/>
    </location>
</feature>
<comment type="function">
    <text evidence="1">Binds as a heterodimer with protein bS6 to the central domain of the 16S rRNA, where it helps stabilize the platform of the 30S subunit.</text>
</comment>
<comment type="subunit">
    <text evidence="1">Part of the 30S ribosomal subunit. Forms a tight heterodimer with protein bS6.</text>
</comment>
<comment type="similarity">
    <text evidence="1">Belongs to the bacterial ribosomal protein bS18 family.</text>
</comment>